<accession>A3N233</accession>
<comment type="function">
    <text evidence="1">Catalyzes the reversible formation of acyl-phosphate (acyl-PO(4)) from acyl-[acyl-carrier-protein] (acyl-ACP). This enzyme utilizes acyl-ACP as fatty acyl donor, but not acyl-CoA.</text>
</comment>
<comment type="catalytic activity">
    <reaction evidence="1">
        <text>a fatty acyl-[ACP] + phosphate = an acyl phosphate + holo-[ACP]</text>
        <dbReference type="Rhea" id="RHEA:42292"/>
        <dbReference type="Rhea" id="RHEA-COMP:9685"/>
        <dbReference type="Rhea" id="RHEA-COMP:14125"/>
        <dbReference type="ChEBI" id="CHEBI:43474"/>
        <dbReference type="ChEBI" id="CHEBI:59918"/>
        <dbReference type="ChEBI" id="CHEBI:64479"/>
        <dbReference type="ChEBI" id="CHEBI:138651"/>
        <dbReference type="EC" id="2.3.1.274"/>
    </reaction>
</comment>
<comment type="pathway">
    <text evidence="1">Lipid metabolism; phospholipid metabolism.</text>
</comment>
<comment type="subunit">
    <text evidence="1">Homodimer. Probably interacts with PlsY.</text>
</comment>
<comment type="subcellular location">
    <subcellularLocation>
        <location evidence="1">Cytoplasm</location>
    </subcellularLocation>
    <text evidence="1">Associated with the membrane possibly through PlsY.</text>
</comment>
<comment type="similarity">
    <text evidence="1">Belongs to the PlsX family.</text>
</comment>
<protein>
    <recommendedName>
        <fullName evidence="1">Phosphate acyltransferase</fullName>
        <ecNumber evidence="1">2.3.1.274</ecNumber>
    </recommendedName>
    <alternativeName>
        <fullName evidence="1">Acyl-ACP phosphotransacylase</fullName>
    </alternativeName>
    <alternativeName>
        <fullName evidence="1">Acyl-[acyl-carrier-protein]--phosphate acyltransferase</fullName>
    </alternativeName>
    <alternativeName>
        <fullName evidence="1">Phosphate-acyl-ACP acyltransferase</fullName>
    </alternativeName>
</protein>
<name>PLSX_ACTP2</name>
<organism>
    <name type="scientific">Actinobacillus pleuropneumoniae serotype 5b (strain L20)</name>
    <dbReference type="NCBI Taxonomy" id="416269"/>
    <lineage>
        <taxon>Bacteria</taxon>
        <taxon>Pseudomonadati</taxon>
        <taxon>Pseudomonadota</taxon>
        <taxon>Gammaproteobacteria</taxon>
        <taxon>Pasteurellales</taxon>
        <taxon>Pasteurellaceae</taxon>
        <taxon>Actinobacillus</taxon>
    </lineage>
</organism>
<sequence>MNRLTLALDVMGGDFGPRITIPALSLALEKNPMLSFVLFGDQSQCSPLLNSLPVTQQQRITFVHTSRIIEADIPFTQALRQSKGSSMRLALEAVARGEAQGCVSGGNTGALVGLAKLLIKPLPNIERPALTTLIPSMNGKSSVMLDLGANVEADSQLLCQFAEMGNIFAEVMLDLVHPRLALLNIGTEENKGNQIIRDTHQLLKQRYDLNYIGFIESDKLMNHFADVIICDGFSGNIALKALEGAAKNILSLLKKPTPDSHLCQTAKRYLLRAIFYRYYRKLQQINPDRHNGATLLGLSSVVVKSHGGAGVNAYFYAIDHAIGQIRSGIPDKISQGLNRLHQNL</sequence>
<keyword id="KW-0963">Cytoplasm</keyword>
<keyword id="KW-0444">Lipid biosynthesis</keyword>
<keyword id="KW-0443">Lipid metabolism</keyword>
<keyword id="KW-0594">Phospholipid biosynthesis</keyword>
<keyword id="KW-1208">Phospholipid metabolism</keyword>
<keyword id="KW-1185">Reference proteome</keyword>
<keyword id="KW-0808">Transferase</keyword>
<reference key="1">
    <citation type="journal article" date="2008" name="J. Bacteriol.">
        <title>The complete genome sequence of Actinobacillus pleuropneumoniae L20 (serotype 5b).</title>
        <authorList>
            <person name="Foote S.J."/>
            <person name="Bosse J.T."/>
            <person name="Bouevitch A.B."/>
            <person name="Langford P.R."/>
            <person name="Young N.M."/>
            <person name="Nash J.H.E."/>
        </authorList>
    </citation>
    <scope>NUCLEOTIDE SEQUENCE [LARGE SCALE GENOMIC DNA]</scope>
    <source>
        <strain>L20</strain>
    </source>
</reference>
<evidence type="ECO:0000255" key="1">
    <source>
        <dbReference type="HAMAP-Rule" id="MF_00019"/>
    </source>
</evidence>
<gene>
    <name evidence="1" type="primary">plsX</name>
    <name type="ordered locus">APL_1385</name>
</gene>
<proteinExistence type="inferred from homology"/>
<dbReference type="EC" id="2.3.1.274" evidence="1"/>
<dbReference type="EMBL" id="CP000569">
    <property type="protein sequence ID" value="ABN74469.1"/>
    <property type="molecule type" value="Genomic_DNA"/>
</dbReference>
<dbReference type="RefSeq" id="WP_009875454.1">
    <property type="nucleotide sequence ID" value="NC_009053.1"/>
</dbReference>
<dbReference type="SMR" id="A3N233"/>
<dbReference type="STRING" id="416269.APL_1385"/>
<dbReference type="EnsemblBacteria" id="ABN74469">
    <property type="protein sequence ID" value="ABN74469"/>
    <property type="gene ID" value="APL_1385"/>
</dbReference>
<dbReference type="KEGG" id="apl:APL_1385"/>
<dbReference type="PATRIC" id="fig|416269.6.peg.1443"/>
<dbReference type="eggNOG" id="COG0416">
    <property type="taxonomic scope" value="Bacteria"/>
</dbReference>
<dbReference type="HOGENOM" id="CLU_039379_1_0_6"/>
<dbReference type="UniPathway" id="UPA00085"/>
<dbReference type="Proteomes" id="UP000001432">
    <property type="component" value="Chromosome"/>
</dbReference>
<dbReference type="GO" id="GO:0005737">
    <property type="term" value="C:cytoplasm"/>
    <property type="evidence" value="ECO:0007669"/>
    <property type="project" value="UniProtKB-SubCell"/>
</dbReference>
<dbReference type="GO" id="GO:0043811">
    <property type="term" value="F:phosphate:acyl-[acyl carrier protein] acyltransferase activity"/>
    <property type="evidence" value="ECO:0007669"/>
    <property type="project" value="UniProtKB-UniRule"/>
</dbReference>
<dbReference type="GO" id="GO:0006633">
    <property type="term" value="P:fatty acid biosynthetic process"/>
    <property type="evidence" value="ECO:0007669"/>
    <property type="project" value="UniProtKB-UniRule"/>
</dbReference>
<dbReference type="GO" id="GO:0008654">
    <property type="term" value="P:phospholipid biosynthetic process"/>
    <property type="evidence" value="ECO:0007669"/>
    <property type="project" value="UniProtKB-KW"/>
</dbReference>
<dbReference type="Gene3D" id="3.40.718.10">
    <property type="entry name" value="Isopropylmalate Dehydrogenase"/>
    <property type="match status" value="1"/>
</dbReference>
<dbReference type="HAMAP" id="MF_00019">
    <property type="entry name" value="PlsX"/>
    <property type="match status" value="1"/>
</dbReference>
<dbReference type="InterPro" id="IPR003664">
    <property type="entry name" value="FA_synthesis"/>
</dbReference>
<dbReference type="InterPro" id="IPR012281">
    <property type="entry name" value="Phospholipid_synth_PlsX-like"/>
</dbReference>
<dbReference type="NCBIfam" id="TIGR00182">
    <property type="entry name" value="plsX"/>
    <property type="match status" value="1"/>
</dbReference>
<dbReference type="PANTHER" id="PTHR30100">
    <property type="entry name" value="FATTY ACID/PHOSPHOLIPID SYNTHESIS PROTEIN PLSX"/>
    <property type="match status" value="1"/>
</dbReference>
<dbReference type="PANTHER" id="PTHR30100:SF1">
    <property type="entry name" value="PHOSPHATE ACYLTRANSFERASE"/>
    <property type="match status" value="1"/>
</dbReference>
<dbReference type="Pfam" id="PF02504">
    <property type="entry name" value="FA_synthesis"/>
    <property type="match status" value="1"/>
</dbReference>
<dbReference type="PIRSF" id="PIRSF002465">
    <property type="entry name" value="Phsphlp_syn_PlsX"/>
    <property type="match status" value="1"/>
</dbReference>
<dbReference type="SUPFAM" id="SSF53659">
    <property type="entry name" value="Isocitrate/Isopropylmalate dehydrogenase-like"/>
    <property type="match status" value="1"/>
</dbReference>
<feature type="chain" id="PRO_0000329205" description="Phosphate acyltransferase">
    <location>
        <begin position="1"/>
        <end position="344"/>
    </location>
</feature>